<protein>
    <recommendedName>
        <fullName evidence="1">Probable endonuclease 4</fullName>
        <ecNumber evidence="1">3.1.21.2</ecNumber>
    </recommendedName>
    <alternativeName>
        <fullName evidence="1">Endodeoxyribonuclease IV</fullName>
    </alternativeName>
    <alternativeName>
        <fullName evidence="1">Endonuclease IV</fullName>
    </alternativeName>
</protein>
<name>END4_CHLPM</name>
<gene>
    <name evidence="1" type="primary">nfo</name>
    <name type="ordered locus">Cvib_0479</name>
</gene>
<sequence length="279" mass="30947">MKRVGAHVSIAGGVENAPLNATAIGAKAFALFTRNQRQWHSPPLQKASVDAFRRHCEAGGFDARHILPHDSYLINLGNPDPDKLERSRKAFIEEMERAETLGLVLLNFHPGSHLNAIGEEECLGLIADSINLAIKATDRVTAVIENTAGQGTNLGSRFEHLRAIIDRIEDRSRIGVCLDTCHLFASGYDLGTAEAAERTFEEFDRTVGMQYLKGMHLNDALRPLGSRLDRHACIGKGMIGIEGFRYIMQSPLFEEIPLILETPDSEGWKEEIELLYSLE</sequence>
<keyword id="KW-0227">DNA damage</keyword>
<keyword id="KW-0234">DNA repair</keyword>
<keyword id="KW-0255">Endonuclease</keyword>
<keyword id="KW-0378">Hydrolase</keyword>
<keyword id="KW-0479">Metal-binding</keyword>
<keyword id="KW-0540">Nuclease</keyword>
<keyword id="KW-0862">Zinc</keyword>
<feature type="chain" id="PRO_1000076806" description="Probable endonuclease 4">
    <location>
        <begin position="1"/>
        <end position="279"/>
    </location>
</feature>
<feature type="binding site" evidence="1">
    <location>
        <position position="69"/>
    </location>
    <ligand>
        <name>Zn(2+)</name>
        <dbReference type="ChEBI" id="CHEBI:29105"/>
        <label>1</label>
    </ligand>
</feature>
<feature type="binding site" evidence="1">
    <location>
        <position position="109"/>
    </location>
    <ligand>
        <name>Zn(2+)</name>
        <dbReference type="ChEBI" id="CHEBI:29105"/>
        <label>1</label>
    </ligand>
</feature>
<feature type="binding site" evidence="1">
    <location>
        <position position="145"/>
    </location>
    <ligand>
        <name>Zn(2+)</name>
        <dbReference type="ChEBI" id="CHEBI:29105"/>
        <label>1</label>
    </ligand>
</feature>
<feature type="binding site" evidence="1">
    <location>
        <position position="145"/>
    </location>
    <ligand>
        <name>Zn(2+)</name>
        <dbReference type="ChEBI" id="CHEBI:29105"/>
        <label>2</label>
    </ligand>
</feature>
<feature type="binding site" evidence="1">
    <location>
        <position position="179"/>
    </location>
    <ligand>
        <name>Zn(2+)</name>
        <dbReference type="ChEBI" id="CHEBI:29105"/>
        <label>2</label>
    </ligand>
</feature>
<feature type="binding site" evidence="1">
    <location>
        <position position="182"/>
    </location>
    <ligand>
        <name>Zn(2+)</name>
        <dbReference type="ChEBI" id="CHEBI:29105"/>
        <label>3</label>
    </ligand>
</feature>
<feature type="binding site" evidence="1">
    <location>
        <position position="216"/>
    </location>
    <ligand>
        <name>Zn(2+)</name>
        <dbReference type="ChEBI" id="CHEBI:29105"/>
        <label>2</label>
    </ligand>
</feature>
<feature type="binding site" evidence="1">
    <location>
        <position position="229"/>
    </location>
    <ligand>
        <name>Zn(2+)</name>
        <dbReference type="ChEBI" id="CHEBI:29105"/>
        <label>3</label>
    </ligand>
</feature>
<feature type="binding site" evidence="1">
    <location>
        <position position="231"/>
    </location>
    <ligand>
        <name>Zn(2+)</name>
        <dbReference type="ChEBI" id="CHEBI:29105"/>
        <label>3</label>
    </ligand>
</feature>
<feature type="binding site" evidence="1">
    <location>
        <position position="261"/>
    </location>
    <ligand>
        <name>Zn(2+)</name>
        <dbReference type="ChEBI" id="CHEBI:29105"/>
        <label>2</label>
    </ligand>
</feature>
<organism>
    <name type="scientific">Chlorobium phaeovibrioides (strain DSM 265 / 1930)</name>
    <name type="common">Prosthecochloris vibrioformis (strain DSM 265)</name>
    <dbReference type="NCBI Taxonomy" id="290318"/>
    <lineage>
        <taxon>Bacteria</taxon>
        <taxon>Pseudomonadati</taxon>
        <taxon>Chlorobiota</taxon>
        <taxon>Chlorobiia</taxon>
        <taxon>Chlorobiales</taxon>
        <taxon>Chlorobiaceae</taxon>
        <taxon>Chlorobium/Pelodictyon group</taxon>
        <taxon>Chlorobium</taxon>
    </lineage>
</organism>
<dbReference type="EC" id="3.1.21.2" evidence="1"/>
<dbReference type="EMBL" id="CP000607">
    <property type="protein sequence ID" value="ABP36501.1"/>
    <property type="molecule type" value="Genomic_DNA"/>
</dbReference>
<dbReference type="SMR" id="A4SDE2"/>
<dbReference type="STRING" id="290318.Cvib_0479"/>
<dbReference type="KEGG" id="pvi:Cvib_0479"/>
<dbReference type="eggNOG" id="COG0648">
    <property type="taxonomic scope" value="Bacteria"/>
</dbReference>
<dbReference type="HOGENOM" id="CLU_025885_0_4_10"/>
<dbReference type="OrthoDB" id="9805666at2"/>
<dbReference type="GO" id="GO:0008833">
    <property type="term" value="F:deoxyribonuclease IV (phage-T4-induced) activity"/>
    <property type="evidence" value="ECO:0007669"/>
    <property type="project" value="UniProtKB-UniRule"/>
</dbReference>
<dbReference type="GO" id="GO:0003677">
    <property type="term" value="F:DNA binding"/>
    <property type="evidence" value="ECO:0007669"/>
    <property type="project" value="InterPro"/>
</dbReference>
<dbReference type="GO" id="GO:0003906">
    <property type="term" value="F:DNA-(apurinic or apyrimidinic site) endonuclease activity"/>
    <property type="evidence" value="ECO:0007669"/>
    <property type="project" value="TreeGrafter"/>
</dbReference>
<dbReference type="GO" id="GO:0008081">
    <property type="term" value="F:phosphoric diester hydrolase activity"/>
    <property type="evidence" value="ECO:0007669"/>
    <property type="project" value="TreeGrafter"/>
</dbReference>
<dbReference type="GO" id="GO:0008270">
    <property type="term" value="F:zinc ion binding"/>
    <property type="evidence" value="ECO:0007669"/>
    <property type="project" value="UniProtKB-UniRule"/>
</dbReference>
<dbReference type="GO" id="GO:0006284">
    <property type="term" value="P:base-excision repair"/>
    <property type="evidence" value="ECO:0007669"/>
    <property type="project" value="TreeGrafter"/>
</dbReference>
<dbReference type="CDD" id="cd00019">
    <property type="entry name" value="AP2Ec"/>
    <property type="match status" value="1"/>
</dbReference>
<dbReference type="FunFam" id="3.20.20.150:FF:000001">
    <property type="entry name" value="Probable endonuclease 4"/>
    <property type="match status" value="1"/>
</dbReference>
<dbReference type="Gene3D" id="3.20.20.150">
    <property type="entry name" value="Divalent-metal-dependent TIM barrel enzymes"/>
    <property type="match status" value="1"/>
</dbReference>
<dbReference type="HAMAP" id="MF_00152">
    <property type="entry name" value="Nfo"/>
    <property type="match status" value="1"/>
</dbReference>
<dbReference type="InterPro" id="IPR001719">
    <property type="entry name" value="AP_endonuc_2"/>
</dbReference>
<dbReference type="InterPro" id="IPR018246">
    <property type="entry name" value="AP_endonuc_F2_Zn_BS"/>
</dbReference>
<dbReference type="InterPro" id="IPR036237">
    <property type="entry name" value="Xyl_isomerase-like_sf"/>
</dbReference>
<dbReference type="InterPro" id="IPR013022">
    <property type="entry name" value="Xyl_isomerase-like_TIM-brl"/>
</dbReference>
<dbReference type="NCBIfam" id="TIGR00587">
    <property type="entry name" value="nfo"/>
    <property type="match status" value="1"/>
</dbReference>
<dbReference type="NCBIfam" id="NF002199">
    <property type="entry name" value="PRK01060.1-4"/>
    <property type="match status" value="1"/>
</dbReference>
<dbReference type="PANTHER" id="PTHR21445:SF0">
    <property type="entry name" value="APURINIC-APYRIMIDINIC ENDONUCLEASE"/>
    <property type="match status" value="1"/>
</dbReference>
<dbReference type="PANTHER" id="PTHR21445">
    <property type="entry name" value="ENDONUCLEASE IV ENDODEOXYRIBONUCLEASE IV"/>
    <property type="match status" value="1"/>
</dbReference>
<dbReference type="Pfam" id="PF01261">
    <property type="entry name" value="AP_endonuc_2"/>
    <property type="match status" value="1"/>
</dbReference>
<dbReference type="SMART" id="SM00518">
    <property type="entry name" value="AP2Ec"/>
    <property type="match status" value="1"/>
</dbReference>
<dbReference type="SUPFAM" id="SSF51658">
    <property type="entry name" value="Xylose isomerase-like"/>
    <property type="match status" value="1"/>
</dbReference>
<dbReference type="PROSITE" id="PS00729">
    <property type="entry name" value="AP_NUCLEASE_F2_1"/>
    <property type="match status" value="1"/>
</dbReference>
<dbReference type="PROSITE" id="PS00730">
    <property type="entry name" value="AP_NUCLEASE_F2_2"/>
    <property type="match status" value="1"/>
</dbReference>
<dbReference type="PROSITE" id="PS00731">
    <property type="entry name" value="AP_NUCLEASE_F2_3"/>
    <property type="match status" value="1"/>
</dbReference>
<dbReference type="PROSITE" id="PS51432">
    <property type="entry name" value="AP_NUCLEASE_F2_4"/>
    <property type="match status" value="1"/>
</dbReference>
<reference key="1">
    <citation type="submission" date="2007-03" db="EMBL/GenBank/DDBJ databases">
        <title>Complete sequence of Prosthecochloris vibrioformis DSM 265.</title>
        <authorList>
            <consortium name="US DOE Joint Genome Institute"/>
            <person name="Copeland A."/>
            <person name="Lucas S."/>
            <person name="Lapidus A."/>
            <person name="Barry K."/>
            <person name="Detter J.C."/>
            <person name="Glavina del Rio T."/>
            <person name="Hammon N."/>
            <person name="Israni S."/>
            <person name="Pitluck S."/>
            <person name="Schmutz J."/>
            <person name="Larimer F."/>
            <person name="Land M."/>
            <person name="Hauser L."/>
            <person name="Mikhailova N."/>
            <person name="Li T."/>
            <person name="Overmann J."/>
            <person name="Schuster S.C."/>
            <person name="Bryant D.A."/>
            <person name="Richardson P."/>
        </authorList>
    </citation>
    <scope>NUCLEOTIDE SEQUENCE [LARGE SCALE GENOMIC DNA]</scope>
    <source>
        <strain>DSM 265 / 1930</strain>
    </source>
</reference>
<evidence type="ECO:0000255" key="1">
    <source>
        <dbReference type="HAMAP-Rule" id="MF_00152"/>
    </source>
</evidence>
<accession>A4SDE2</accession>
<comment type="function">
    <text evidence="1">Endonuclease IV plays a role in DNA repair. It cleaves phosphodiester bonds at apurinic or apyrimidinic (AP) sites, generating a 3'-hydroxyl group and a 5'-terminal sugar phosphate.</text>
</comment>
<comment type="catalytic activity">
    <reaction evidence="1">
        <text>Endonucleolytic cleavage to 5'-phosphooligonucleotide end-products.</text>
        <dbReference type="EC" id="3.1.21.2"/>
    </reaction>
</comment>
<comment type="cofactor">
    <cofactor evidence="1">
        <name>Zn(2+)</name>
        <dbReference type="ChEBI" id="CHEBI:29105"/>
    </cofactor>
    <text evidence="1">Binds 3 Zn(2+) ions.</text>
</comment>
<comment type="similarity">
    <text evidence="1">Belongs to the AP endonuclease 2 family.</text>
</comment>
<proteinExistence type="inferred from homology"/>